<proteinExistence type="evidence at protein level"/>
<reference key="1">
    <citation type="journal article" date="2008" name="Eur. J. Hum. Genet.">
        <title>Williams-Beuren syndrome TRIM50 encodes an E3 ubiquitin ligase.</title>
        <authorList>
            <person name="Micale L."/>
            <person name="Fusco C."/>
            <person name="Augello B."/>
            <person name="Napolitano L.M.R."/>
            <person name="Dermitzakis E.T."/>
            <person name="Meroni G."/>
            <person name="Merla G."/>
            <person name="Reymond A."/>
        </authorList>
    </citation>
    <scope>NUCLEOTIDE SEQUENCE (ISOFORMS ALPHA AND BETA)</scope>
    <scope>FUNCTION</scope>
    <scope>SUBCELLULAR LOCATION</scope>
    <scope>AUTOUBIQUITINATION</scope>
    <scope>DIMERIZATION</scope>
    <scope>TRIMERIZATION</scope>
    <scope>INTERACTION WITH UBE2L6; UBE2E1 AND UBE2E3</scope>
    <scope>VARIANTS LEU-8 AND TRP-13</scope>
</reference>
<reference evidence="13" key="2">
    <citation type="submission" date="2007-10" db="EMBL/GenBank/DDBJ databases">
        <title>NEDO human cDNA sequencing project.</title>
        <authorList>
            <person name="Wakamatsu A."/>
            <person name="Yamamoto J."/>
            <person name="Kimura K."/>
            <person name="Ishii S."/>
            <person name="Watanabe K."/>
            <person name="Sugiyama A."/>
            <person name="Murakawa K."/>
            <person name="Kaida T."/>
            <person name="Tsuchiya K."/>
            <person name="Fukuzumi Y."/>
            <person name="Kumagai A."/>
            <person name="Oishi Y."/>
            <person name="Yamamoto S."/>
            <person name="Ono Y."/>
            <person name="Komori Y."/>
            <person name="Yamazaki M."/>
            <person name="Kisu Y."/>
            <person name="Nishikawa T."/>
            <person name="Sugano S."/>
            <person name="Nomura N."/>
            <person name="Isogai T."/>
        </authorList>
    </citation>
    <scope>NUCLEOTIDE SEQUENCE [LARGE SCALE MRNA]</scope>
    <source>
        <tissue evidence="13">Stomach</tissue>
    </source>
</reference>
<reference key="3">
    <citation type="journal article" date="2003" name="Nature">
        <title>The DNA sequence of human chromosome 7.</title>
        <authorList>
            <person name="Hillier L.W."/>
            <person name="Fulton R.S."/>
            <person name="Fulton L.A."/>
            <person name="Graves T.A."/>
            <person name="Pepin K.H."/>
            <person name="Wagner-McPherson C."/>
            <person name="Layman D."/>
            <person name="Maas J."/>
            <person name="Jaeger S."/>
            <person name="Walker R."/>
            <person name="Wylie K."/>
            <person name="Sekhon M."/>
            <person name="Becker M.C."/>
            <person name="O'Laughlin M.D."/>
            <person name="Schaller M.E."/>
            <person name="Fewell G.A."/>
            <person name="Delehaunty K.D."/>
            <person name="Miner T.L."/>
            <person name="Nash W.E."/>
            <person name="Cordes M."/>
            <person name="Du H."/>
            <person name="Sun H."/>
            <person name="Edwards J."/>
            <person name="Bradshaw-Cordum H."/>
            <person name="Ali J."/>
            <person name="Andrews S."/>
            <person name="Isak A."/>
            <person name="Vanbrunt A."/>
            <person name="Nguyen C."/>
            <person name="Du F."/>
            <person name="Lamar B."/>
            <person name="Courtney L."/>
            <person name="Kalicki J."/>
            <person name="Ozersky P."/>
            <person name="Bielicki L."/>
            <person name="Scott K."/>
            <person name="Holmes A."/>
            <person name="Harkins R."/>
            <person name="Harris A."/>
            <person name="Strong C.M."/>
            <person name="Hou S."/>
            <person name="Tomlinson C."/>
            <person name="Dauphin-Kohlberg S."/>
            <person name="Kozlowicz-Reilly A."/>
            <person name="Leonard S."/>
            <person name="Rohlfing T."/>
            <person name="Rock S.M."/>
            <person name="Tin-Wollam A.-M."/>
            <person name="Abbott A."/>
            <person name="Minx P."/>
            <person name="Maupin R."/>
            <person name="Strowmatt C."/>
            <person name="Latreille P."/>
            <person name="Miller N."/>
            <person name="Johnson D."/>
            <person name="Murray J."/>
            <person name="Woessner J.P."/>
            <person name="Wendl M.C."/>
            <person name="Yang S.-P."/>
            <person name="Schultz B.R."/>
            <person name="Wallis J.W."/>
            <person name="Spieth J."/>
            <person name="Bieri T.A."/>
            <person name="Nelson J.O."/>
            <person name="Berkowicz N."/>
            <person name="Wohldmann P.E."/>
            <person name="Cook L.L."/>
            <person name="Hickenbotham M.T."/>
            <person name="Eldred J."/>
            <person name="Williams D."/>
            <person name="Bedell J.A."/>
            <person name="Mardis E.R."/>
            <person name="Clifton S.W."/>
            <person name="Chissoe S.L."/>
            <person name="Marra M.A."/>
            <person name="Raymond C."/>
            <person name="Haugen E."/>
            <person name="Gillett W."/>
            <person name="Zhou Y."/>
            <person name="James R."/>
            <person name="Phelps K."/>
            <person name="Iadanoto S."/>
            <person name="Bubb K."/>
            <person name="Simms E."/>
            <person name="Levy R."/>
            <person name="Clendenning J."/>
            <person name="Kaul R."/>
            <person name="Kent W.J."/>
            <person name="Furey T.S."/>
            <person name="Baertsch R.A."/>
            <person name="Brent M.R."/>
            <person name="Keibler E."/>
            <person name="Flicek P."/>
            <person name="Bork P."/>
            <person name="Suyama M."/>
            <person name="Bailey J.A."/>
            <person name="Portnoy M.E."/>
            <person name="Torrents D."/>
            <person name="Chinwalla A.T."/>
            <person name="Gish W.R."/>
            <person name="Eddy S.R."/>
            <person name="McPherson J.D."/>
            <person name="Olson M.V."/>
            <person name="Eichler E.E."/>
            <person name="Green E.D."/>
            <person name="Waterston R.H."/>
            <person name="Wilson R.K."/>
        </authorList>
    </citation>
    <scope>NUCLEOTIDE SEQUENCE [LARGE SCALE GENOMIC DNA]</scope>
</reference>
<reference key="4">
    <citation type="submission" date="2005-09" db="EMBL/GenBank/DDBJ databases">
        <authorList>
            <person name="Mural R.J."/>
            <person name="Istrail S."/>
            <person name="Sutton G.G."/>
            <person name="Florea L."/>
            <person name="Halpern A.L."/>
            <person name="Mobarry C.M."/>
            <person name="Lippert R."/>
            <person name="Walenz B."/>
            <person name="Shatkay H."/>
            <person name="Dew I."/>
            <person name="Miller J.R."/>
            <person name="Flanigan M.J."/>
            <person name="Edwards N.J."/>
            <person name="Bolanos R."/>
            <person name="Fasulo D."/>
            <person name="Halldorsson B.V."/>
            <person name="Hannenhalli S."/>
            <person name="Turner R."/>
            <person name="Yooseph S."/>
            <person name="Lu F."/>
            <person name="Nusskern D.R."/>
            <person name="Shue B.C."/>
            <person name="Zheng X.H."/>
            <person name="Zhong F."/>
            <person name="Delcher A.L."/>
            <person name="Huson D.H."/>
            <person name="Kravitz S.A."/>
            <person name="Mouchard L."/>
            <person name="Reinert K."/>
            <person name="Remington K.A."/>
            <person name="Clark A.G."/>
            <person name="Waterman M.S."/>
            <person name="Eichler E.E."/>
            <person name="Adams M.D."/>
            <person name="Hunkapiller M.W."/>
            <person name="Myers E.W."/>
            <person name="Venter J.C."/>
        </authorList>
    </citation>
    <scope>NUCLEOTIDE SEQUENCE [LARGE SCALE GENOMIC DNA]</scope>
</reference>
<reference evidence="12" key="5">
    <citation type="journal article" date="2004" name="Genome Res.">
        <title>The status, quality, and expansion of the NIH full-length cDNA project: the Mammalian Gene Collection (MGC).</title>
        <authorList>
            <consortium name="The MGC Project Team"/>
        </authorList>
    </citation>
    <scope>NUCLEOTIDE SEQUENCE [LARGE SCALE MRNA]</scope>
</reference>
<reference key="6">
    <citation type="journal article" date="2012" name="PLoS ONE">
        <title>The E3-ubiquitin ligase TRIM50 interacts with HDAC6 and p62, and promotes the sequestration and clearance of ubiquitinated proteins into the aggresome.</title>
        <authorList>
            <person name="Fusco C."/>
            <person name="Micale L."/>
            <person name="Egorov M."/>
            <person name="Monti M."/>
            <person name="D'Addetta E.V."/>
            <person name="Augello B."/>
            <person name="Cozzolino F."/>
            <person name="Calcagni A."/>
            <person name="Fontana A."/>
            <person name="Polishchuk R.S."/>
            <person name="Didelot G."/>
            <person name="Reymond A."/>
            <person name="Pucci P."/>
            <person name="Merla G."/>
        </authorList>
    </citation>
    <scope>FUNCTION</scope>
    <scope>INTERACTION WITH SQSTM1</scope>
    <scope>SUBCELLULAR LOCATION</scope>
</reference>
<reference key="7">
    <citation type="journal article" date="2014" name="Cell. Signal.">
        <title>HDAC6 mediates the acetylation of TRIM50.</title>
        <authorList>
            <person name="Fusco C."/>
            <person name="Micale L."/>
            <person name="Augello B."/>
            <person name="Mandriani B."/>
            <person name="Pellico M.T."/>
            <person name="De Nittis P."/>
            <person name="Calcagni A."/>
            <person name="Monti M."/>
            <person name="Cozzolino F."/>
            <person name="Pucci P."/>
            <person name="Merla G."/>
        </authorList>
    </citation>
    <scope>SUBCELLULAR LOCATION</scope>
    <scope>ACETYLATION</scope>
</reference>
<reference key="8">
    <citation type="journal article" date="2018" name="Biochim. Biophys. Acta">
        <title>TRIM50 regulates Beclin 1 proautophagic activity.</title>
        <authorList>
            <person name="Fusco C."/>
            <person name="Mandriani B."/>
            <person name="Di Rienzo M."/>
            <person name="Micale L."/>
            <person name="Malerba N."/>
            <person name="Cocciadiferro D."/>
            <person name="Sjoettem E."/>
            <person name="Augello B."/>
            <person name="Squeo G.M."/>
            <person name="Pellico M.T."/>
            <person name="Jain A."/>
            <person name="Johansen T."/>
            <person name="Fimia G.M."/>
            <person name="Merla G."/>
        </authorList>
    </citation>
    <scope>FUNCTION</scope>
    <scope>SUBCELLULAR LOCATION</scope>
    <scope>INTERACTION WITH BECN1</scope>
</reference>
<organism>
    <name type="scientific">Homo sapiens</name>
    <name type="common">Human</name>
    <dbReference type="NCBI Taxonomy" id="9606"/>
    <lineage>
        <taxon>Eukaryota</taxon>
        <taxon>Metazoa</taxon>
        <taxon>Chordata</taxon>
        <taxon>Craniata</taxon>
        <taxon>Vertebrata</taxon>
        <taxon>Euteleostomi</taxon>
        <taxon>Mammalia</taxon>
        <taxon>Eutheria</taxon>
        <taxon>Euarchontoglires</taxon>
        <taxon>Primates</taxon>
        <taxon>Haplorrhini</taxon>
        <taxon>Catarrhini</taxon>
        <taxon>Hominidae</taxon>
        <taxon>Homo</taxon>
    </lineage>
</organism>
<name>TRI50_HUMAN</name>
<feature type="chain" id="PRO_0000056274" description="E3 ubiquitin-protein ligase TRIM50">
    <location>
        <begin position="1"/>
        <end position="487"/>
    </location>
</feature>
<feature type="domain" description="B30.2/SPRY" evidence="5">
    <location>
        <begin position="276"/>
        <end position="475"/>
    </location>
</feature>
<feature type="zinc finger region" description="RING-type" evidence="4">
    <location>
        <begin position="16"/>
        <end position="57"/>
    </location>
</feature>
<feature type="zinc finger region" description="B box-type" evidence="3">
    <location>
        <begin position="84"/>
        <end position="125"/>
    </location>
</feature>
<feature type="region of interest" description="Disordered" evidence="6">
    <location>
        <begin position="468"/>
        <end position="487"/>
    </location>
</feature>
<feature type="coiled-coil region" evidence="2">
    <location>
        <begin position="125"/>
        <end position="169"/>
    </location>
</feature>
<feature type="coiled-coil region" evidence="2">
    <location>
        <begin position="204"/>
        <end position="235"/>
    </location>
</feature>
<feature type="compositionally biased region" description="Pro residues" evidence="6">
    <location>
        <begin position="469"/>
        <end position="481"/>
    </location>
</feature>
<feature type="binding site" evidence="3">
    <location>
        <position position="89"/>
    </location>
    <ligand>
        <name>Zn(2+)</name>
        <dbReference type="ChEBI" id="CHEBI:29105"/>
    </ligand>
</feature>
<feature type="binding site" evidence="3">
    <location>
        <position position="92"/>
    </location>
    <ligand>
        <name>Zn(2+)</name>
        <dbReference type="ChEBI" id="CHEBI:29105"/>
    </ligand>
</feature>
<feature type="binding site" evidence="3">
    <location>
        <position position="111"/>
    </location>
    <ligand>
        <name>Zn(2+)</name>
        <dbReference type="ChEBI" id="CHEBI:29105"/>
    </ligand>
</feature>
<feature type="binding site" evidence="3">
    <location>
        <position position="117"/>
    </location>
    <ligand>
        <name>Zn(2+)</name>
        <dbReference type="ChEBI" id="CHEBI:29105"/>
    </ligand>
</feature>
<feature type="modified residue" description="N6-acetyllysine" evidence="1">
    <location>
        <position position="373"/>
    </location>
</feature>
<feature type="splice variant" id="VSP_012088" description="In isoform Beta." evidence="11">
    <location>
        <position position="243"/>
    </location>
</feature>
<feature type="sequence variant" id="VAR_020491" description="In dbSNP:rs6980124." evidence="7">
    <original>P</original>
    <variation>L</variation>
    <location>
        <position position="8"/>
    </location>
</feature>
<feature type="sequence variant" id="VAR_085709" evidence="7">
    <original>R</original>
    <variation>W</variation>
    <location>
        <position position="13"/>
    </location>
</feature>
<dbReference type="EC" id="2.3.2.27" evidence="10"/>
<dbReference type="EMBL" id="AY081948">
    <property type="protein sequence ID" value="AAL91071.1"/>
    <property type="molecule type" value="mRNA"/>
</dbReference>
<dbReference type="EMBL" id="AY081949">
    <property type="protein sequence ID" value="AAL91072.1"/>
    <property type="molecule type" value="mRNA"/>
</dbReference>
<dbReference type="EMBL" id="AK292074">
    <property type="protein sequence ID" value="BAF84763.1"/>
    <property type="molecule type" value="mRNA"/>
</dbReference>
<dbReference type="EMBL" id="AC073841">
    <property type="status" value="NOT_ANNOTATED_CDS"/>
    <property type="molecule type" value="Genomic_DNA"/>
</dbReference>
<dbReference type="EMBL" id="CH471200">
    <property type="protein sequence ID" value="EAW69688.1"/>
    <property type="molecule type" value="Genomic_DNA"/>
</dbReference>
<dbReference type="EMBL" id="CH471200">
    <property type="protein sequence ID" value="EAW69691.1"/>
    <property type="molecule type" value="Genomic_DNA"/>
</dbReference>
<dbReference type="EMBL" id="BC112152">
    <property type="protein sequence ID" value="AAI12153.1"/>
    <property type="molecule type" value="mRNA"/>
</dbReference>
<dbReference type="EMBL" id="BC112154">
    <property type="protein sequence ID" value="AAI12155.1"/>
    <property type="molecule type" value="mRNA"/>
</dbReference>
<dbReference type="CCDS" id="CCDS34654.1">
    <molecule id="Q86XT4-1"/>
</dbReference>
<dbReference type="RefSeq" id="NP_001268379.1">
    <molecule id="Q86XT4-2"/>
    <property type="nucleotide sequence ID" value="NM_001281450.1"/>
</dbReference>
<dbReference type="RefSeq" id="NP_001268380.1">
    <molecule id="Q86XT4-1"/>
    <property type="nucleotide sequence ID" value="NM_001281451.1"/>
</dbReference>
<dbReference type="RefSeq" id="NP_835226.2">
    <molecule id="Q86XT4-1"/>
    <property type="nucleotide sequence ID" value="NM_178125.3"/>
</dbReference>
<dbReference type="RefSeq" id="XP_011514091.2">
    <molecule id="Q86XT4-2"/>
    <property type="nucleotide sequence ID" value="XM_011515789.2"/>
</dbReference>
<dbReference type="RefSeq" id="XP_054213203.1">
    <molecule id="Q86XT4-2"/>
    <property type="nucleotide sequence ID" value="XM_054357228.1"/>
</dbReference>
<dbReference type="SMR" id="Q86XT4"/>
<dbReference type="BioGRID" id="126435">
    <property type="interactions" value="55"/>
</dbReference>
<dbReference type="FunCoup" id="Q86XT4">
    <property type="interactions" value="315"/>
</dbReference>
<dbReference type="IntAct" id="Q86XT4">
    <property type="interactions" value="36"/>
</dbReference>
<dbReference type="STRING" id="9606.ENSP00000327994"/>
<dbReference type="GlyGen" id="Q86XT4">
    <property type="glycosylation" value="1 site, 1 O-linked glycan (1 site)"/>
</dbReference>
<dbReference type="iPTMnet" id="Q86XT4"/>
<dbReference type="PhosphoSitePlus" id="Q86XT4"/>
<dbReference type="BioMuta" id="TRIM50"/>
<dbReference type="DMDM" id="56404881"/>
<dbReference type="jPOST" id="Q86XT4"/>
<dbReference type="MassIVE" id="Q86XT4"/>
<dbReference type="PaxDb" id="9606-ENSP00000327994"/>
<dbReference type="PeptideAtlas" id="Q86XT4"/>
<dbReference type="Antibodypedia" id="14287">
    <property type="antibodies" value="128 antibodies from 19 providers"/>
</dbReference>
<dbReference type="DNASU" id="135892"/>
<dbReference type="Ensembl" id="ENST00000333149.7">
    <molecule id="Q86XT4-1"/>
    <property type="protein sequence ID" value="ENSP00000327994.2"/>
    <property type="gene ID" value="ENSG00000146755.11"/>
</dbReference>
<dbReference type="Ensembl" id="ENST00000453152.1">
    <molecule id="Q86XT4-1"/>
    <property type="protein sequence ID" value="ENSP00000413875.1"/>
    <property type="gene ID" value="ENSG00000146755.11"/>
</dbReference>
<dbReference type="GeneID" id="135892"/>
<dbReference type="KEGG" id="hsa:135892"/>
<dbReference type="MANE-Select" id="ENST00000333149.7">
    <property type="protein sequence ID" value="ENSP00000327994.2"/>
    <property type="RefSeq nucleotide sequence ID" value="NM_178125.3"/>
    <property type="RefSeq protein sequence ID" value="NP_835226.2"/>
</dbReference>
<dbReference type="UCSC" id="uc032zrf.2">
    <molecule id="Q86XT4-1"/>
    <property type="organism name" value="human"/>
</dbReference>
<dbReference type="AGR" id="HGNC:19017"/>
<dbReference type="CTD" id="135892"/>
<dbReference type="DisGeNET" id="135892"/>
<dbReference type="GeneCards" id="TRIM50"/>
<dbReference type="HGNC" id="HGNC:19017">
    <property type="gene designation" value="TRIM50"/>
</dbReference>
<dbReference type="HPA" id="ENSG00000146755">
    <property type="expression patterns" value="Group enriched (pancreas, parathyroid gland, stomach)"/>
</dbReference>
<dbReference type="MIM" id="612548">
    <property type="type" value="gene"/>
</dbReference>
<dbReference type="neXtProt" id="NX_Q86XT4"/>
<dbReference type="OpenTargets" id="ENSG00000146755"/>
<dbReference type="PharmGKB" id="PA38778"/>
<dbReference type="VEuPathDB" id="HostDB:ENSG00000146755"/>
<dbReference type="eggNOG" id="KOG2177">
    <property type="taxonomic scope" value="Eukaryota"/>
</dbReference>
<dbReference type="GeneTree" id="ENSGT00940000161467"/>
<dbReference type="HOGENOM" id="CLU_013137_0_3_1"/>
<dbReference type="InParanoid" id="Q86XT4"/>
<dbReference type="OMA" id="DVCWHER"/>
<dbReference type="OrthoDB" id="6105938at2759"/>
<dbReference type="PAN-GO" id="Q86XT4">
    <property type="GO annotations" value="3 GO annotations based on evolutionary models"/>
</dbReference>
<dbReference type="PhylomeDB" id="Q86XT4"/>
<dbReference type="TreeFam" id="TF342569"/>
<dbReference type="PathwayCommons" id="Q86XT4"/>
<dbReference type="Reactome" id="R-HSA-983168">
    <property type="pathway name" value="Antigen processing: Ubiquitination &amp; Proteasome degradation"/>
</dbReference>
<dbReference type="SignaLink" id="Q86XT4"/>
<dbReference type="SIGNOR" id="Q86XT4"/>
<dbReference type="BioGRID-ORCS" id="135892">
    <property type="hits" value="11 hits in 1178 CRISPR screens"/>
</dbReference>
<dbReference type="ChiTaRS" id="TRIM50">
    <property type="organism name" value="human"/>
</dbReference>
<dbReference type="GenomeRNAi" id="135892"/>
<dbReference type="Pharos" id="Q86XT4">
    <property type="development level" value="Tbio"/>
</dbReference>
<dbReference type="PRO" id="PR:Q86XT4"/>
<dbReference type="Proteomes" id="UP000005640">
    <property type="component" value="Chromosome 7"/>
</dbReference>
<dbReference type="RNAct" id="Q86XT4">
    <property type="molecule type" value="protein"/>
</dbReference>
<dbReference type="Bgee" id="ENSG00000146755">
    <property type="expression patterns" value="Expressed in body of pancreas and 101 other cell types or tissues"/>
</dbReference>
<dbReference type="ExpressionAtlas" id="Q86XT4">
    <property type="expression patterns" value="baseline and differential"/>
</dbReference>
<dbReference type="GO" id="GO:0005737">
    <property type="term" value="C:cytoplasm"/>
    <property type="evidence" value="ECO:0000318"/>
    <property type="project" value="GO_Central"/>
</dbReference>
<dbReference type="GO" id="GO:0005829">
    <property type="term" value="C:cytosol"/>
    <property type="evidence" value="ECO:0000314"/>
    <property type="project" value="HPA"/>
</dbReference>
<dbReference type="GO" id="GO:0042802">
    <property type="term" value="F:identical protein binding"/>
    <property type="evidence" value="ECO:0000353"/>
    <property type="project" value="IntAct"/>
</dbReference>
<dbReference type="GO" id="GO:0061630">
    <property type="term" value="F:ubiquitin protein ligase activity"/>
    <property type="evidence" value="ECO:0000318"/>
    <property type="project" value="GO_Central"/>
</dbReference>
<dbReference type="GO" id="GO:0008270">
    <property type="term" value="F:zinc ion binding"/>
    <property type="evidence" value="ECO:0007669"/>
    <property type="project" value="UniProtKB-KW"/>
</dbReference>
<dbReference type="GO" id="GO:0045087">
    <property type="term" value="P:innate immune response"/>
    <property type="evidence" value="ECO:0000318"/>
    <property type="project" value="GO_Central"/>
</dbReference>
<dbReference type="CDD" id="cd19787">
    <property type="entry name" value="Bbox2_TRIM50-like"/>
    <property type="match status" value="1"/>
</dbReference>
<dbReference type="CDD" id="cd16605">
    <property type="entry name" value="RING-HC_TRIM50_like_C-IV"/>
    <property type="match status" value="1"/>
</dbReference>
<dbReference type="CDD" id="cd13743">
    <property type="entry name" value="SPRY_PRY_TRIM50"/>
    <property type="match status" value="1"/>
</dbReference>
<dbReference type="FunFam" id="2.60.120.920:FF:000027">
    <property type="entry name" value="E3 ubiquitin-protein ligase TRIM50"/>
    <property type="match status" value="1"/>
</dbReference>
<dbReference type="FunFam" id="3.30.160.60:FF:001490">
    <property type="entry name" value="E3 ubiquitin-protein ligase TRIM50"/>
    <property type="match status" value="1"/>
</dbReference>
<dbReference type="FunFam" id="3.30.40.10:FF:000390">
    <property type="entry name" value="E3 ubiquitin-protein ligase TRIM50"/>
    <property type="match status" value="1"/>
</dbReference>
<dbReference type="Gene3D" id="2.60.120.920">
    <property type="match status" value="1"/>
</dbReference>
<dbReference type="Gene3D" id="3.30.160.60">
    <property type="entry name" value="Classic Zinc Finger"/>
    <property type="match status" value="1"/>
</dbReference>
<dbReference type="Gene3D" id="3.30.40.10">
    <property type="entry name" value="Zinc/RING finger domain, C3HC4 (zinc finger)"/>
    <property type="match status" value="1"/>
</dbReference>
<dbReference type="InterPro" id="IPR001870">
    <property type="entry name" value="B30.2/SPRY"/>
</dbReference>
<dbReference type="InterPro" id="IPR043136">
    <property type="entry name" value="B30.2/SPRY_sf"/>
</dbReference>
<dbReference type="InterPro" id="IPR003879">
    <property type="entry name" value="Butyrophylin_SPRY"/>
</dbReference>
<dbReference type="InterPro" id="IPR013320">
    <property type="entry name" value="ConA-like_dom_sf"/>
</dbReference>
<dbReference type="InterPro" id="IPR006574">
    <property type="entry name" value="PRY"/>
</dbReference>
<dbReference type="InterPro" id="IPR003877">
    <property type="entry name" value="SPRY_dom"/>
</dbReference>
<dbReference type="InterPro" id="IPR050143">
    <property type="entry name" value="TRIM/RBCC"/>
</dbReference>
<dbReference type="InterPro" id="IPR027370">
    <property type="entry name" value="Znf-RING_euk"/>
</dbReference>
<dbReference type="InterPro" id="IPR000315">
    <property type="entry name" value="Znf_B-box"/>
</dbReference>
<dbReference type="InterPro" id="IPR001841">
    <property type="entry name" value="Znf_RING"/>
</dbReference>
<dbReference type="InterPro" id="IPR013083">
    <property type="entry name" value="Znf_RING/FYVE/PHD"/>
</dbReference>
<dbReference type="InterPro" id="IPR017907">
    <property type="entry name" value="Znf_RING_CS"/>
</dbReference>
<dbReference type="PANTHER" id="PTHR24103">
    <property type="entry name" value="E3 UBIQUITIN-PROTEIN LIGASE TRIM"/>
    <property type="match status" value="1"/>
</dbReference>
<dbReference type="Pfam" id="PF13765">
    <property type="entry name" value="PRY"/>
    <property type="match status" value="1"/>
</dbReference>
<dbReference type="Pfam" id="PF00622">
    <property type="entry name" value="SPRY"/>
    <property type="match status" value="1"/>
</dbReference>
<dbReference type="Pfam" id="PF00643">
    <property type="entry name" value="zf-B_box"/>
    <property type="match status" value="1"/>
</dbReference>
<dbReference type="Pfam" id="PF13445">
    <property type="entry name" value="zf-RING_UBOX"/>
    <property type="match status" value="1"/>
</dbReference>
<dbReference type="PRINTS" id="PR01407">
    <property type="entry name" value="BUTYPHLNCDUF"/>
</dbReference>
<dbReference type="SMART" id="SM00336">
    <property type="entry name" value="BBOX"/>
    <property type="match status" value="1"/>
</dbReference>
<dbReference type="SMART" id="SM00589">
    <property type="entry name" value="PRY"/>
    <property type="match status" value="1"/>
</dbReference>
<dbReference type="SMART" id="SM00184">
    <property type="entry name" value="RING"/>
    <property type="match status" value="1"/>
</dbReference>
<dbReference type="SMART" id="SM00449">
    <property type="entry name" value="SPRY"/>
    <property type="match status" value="1"/>
</dbReference>
<dbReference type="SUPFAM" id="SSF57845">
    <property type="entry name" value="B-box zinc-binding domain"/>
    <property type="match status" value="1"/>
</dbReference>
<dbReference type="SUPFAM" id="SSF49899">
    <property type="entry name" value="Concanavalin A-like lectins/glucanases"/>
    <property type="match status" value="1"/>
</dbReference>
<dbReference type="SUPFAM" id="SSF57850">
    <property type="entry name" value="RING/U-box"/>
    <property type="match status" value="1"/>
</dbReference>
<dbReference type="PROSITE" id="PS50188">
    <property type="entry name" value="B302_SPRY"/>
    <property type="match status" value="1"/>
</dbReference>
<dbReference type="PROSITE" id="PS50119">
    <property type="entry name" value="ZF_BBOX"/>
    <property type="match status" value="1"/>
</dbReference>
<dbReference type="PROSITE" id="PS00518">
    <property type="entry name" value="ZF_RING_1"/>
    <property type="match status" value="1"/>
</dbReference>
<dbReference type="PROSITE" id="PS50089">
    <property type="entry name" value="ZF_RING_2"/>
    <property type="match status" value="1"/>
</dbReference>
<protein>
    <recommendedName>
        <fullName>E3 ubiquitin-protein ligase TRIM50</fullName>
        <ecNumber evidence="10">2.3.2.27</ecNumber>
    </recommendedName>
    <alternativeName>
        <fullName evidence="11">RING-type E3 ubiquitin transferase TRIM50</fullName>
    </alternativeName>
    <alternativeName>
        <fullName>Tripartite motif-containing protein 50</fullName>
    </alternativeName>
</protein>
<keyword id="KW-0007">Acetylation</keyword>
<keyword id="KW-0025">Alternative splicing</keyword>
<keyword id="KW-0175">Coiled coil</keyword>
<keyword id="KW-0963">Cytoplasm</keyword>
<keyword id="KW-0479">Metal-binding</keyword>
<keyword id="KW-1267">Proteomics identification</keyword>
<keyword id="KW-1185">Reference proteome</keyword>
<keyword id="KW-0808">Transferase</keyword>
<keyword id="KW-0832">Ubl conjugation</keyword>
<keyword id="KW-0833">Ubl conjugation pathway</keyword>
<keyword id="KW-0862">Zinc</keyword>
<keyword id="KW-0863">Zinc-finger</keyword>
<accession>Q86XT4</accession>
<accession>Q2M204</accession>
<accession>Q86XT3</accession>
<gene>
    <name evidence="14" type="primary">TRIM50</name>
    <name type="synonym">TRIM50A</name>
</gene>
<evidence type="ECO:0000250" key="1">
    <source>
        <dbReference type="UniProtKB" id="Q810I2"/>
    </source>
</evidence>
<evidence type="ECO:0000255" key="2"/>
<evidence type="ECO:0000255" key="3">
    <source>
        <dbReference type="PROSITE-ProRule" id="PRU00024"/>
    </source>
</evidence>
<evidence type="ECO:0000255" key="4">
    <source>
        <dbReference type="PROSITE-ProRule" id="PRU00175"/>
    </source>
</evidence>
<evidence type="ECO:0000255" key="5">
    <source>
        <dbReference type="PROSITE-ProRule" id="PRU00548"/>
    </source>
</evidence>
<evidence type="ECO:0000256" key="6">
    <source>
        <dbReference type="SAM" id="MobiDB-lite"/>
    </source>
</evidence>
<evidence type="ECO:0000269" key="7">
    <source>
    </source>
</evidence>
<evidence type="ECO:0000269" key="8">
    <source>
    </source>
</evidence>
<evidence type="ECO:0000269" key="9">
    <source>
    </source>
</evidence>
<evidence type="ECO:0000269" key="10">
    <source>
    </source>
</evidence>
<evidence type="ECO:0000305" key="11"/>
<evidence type="ECO:0000312" key="12">
    <source>
        <dbReference type="EMBL" id="AAI12155.1"/>
    </source>
</evidence>
<evidence type="ECO:0000312" key="13">
    <source>
        <dbReference type="EMBL" id="BAF84763.1"/>
    </source>
</evidence>
<evidence type="ECO:0000312" key="14">
    <source>
        <dbReference type="HGNC" id="HGNC:19017"/>
    </source>
</evidence>
<comment type="function">
    <text evidence="1 7 8 10">E3 ubiquitin-protein ligase that ubiquitinates Beclin-1/BECN1 in a 'Lys-63'-dependent manner enhancing its binding to ULK1 (PubMed:29604308). In turn, promotes starvation-induced autophagy activation. Also interacts with p62/SQSTM1 protein and thereby induces the formation and the autophagy clearance of aggresome-associated polyubiquitinated proteins through HDAC6 interaction (PubMed:22792322). Also promotes NLRP3 inflammasome activation by directly inducing NLRP3 oligomerization independent of its E3 ligase function (By similarity).</text>
</comment>
<comment type="catalytic activity">
    <reaction evidence="10">
        <text>S-ubiquitinyl-[E2 ubiquitin-conjugating enzyme]-L-cysteine + [acceptor protein]-L-lysine = [E2 ubiquitin-conjugating enzyme]-L-cysteine + N(6)-ubiquitinyl-[acceptor protein]-L-lysine.</text>
        <dbReference type="EC" id="2.3.2.27"/>
    </reaction>
</comment>
<comment type="subunit">
    <text evidence="1 7 8 10">Can form dimers and trimers. Interacts with several E2 ubiquitin-conjugating enzymes, including UBE2L6, UBE2E1, UBE2E3. No interaction with UBE2H. Interacts with BECN1. Interacts with SQSTM1. Interacts with NLRP3 (By similarity).</text>
</comment>
<comment type="interaction">
    <interactant intactId="EBI-9867283">
        <id>Q86XT4</id>
    </interactant>
    <interactant intactId="EBI-2825900">
        <id>Q92619</id>
        <label>ARHGAP45</label>
    </interactant>
    <organismsDiffer>false</organismsDiffer>
    <experiments>3</experiments>
</comment>
<comment type="interaction">
    <interactant intactId="EBI-9867283">
        <id>Q86XT4</id>
    </interactant>
    <interactant intactId="EBI-746238">
        <id>Q07002</id>
        <label>CDK18</label>
    </interactant>
    <organismsDiffer>false</organismsDiffer>
    <experiments>3</experiments>
</comment>
<comment type="interaction">
    <interactant intactId="EBI-9867283">
        <id>Q86XT4</id>
    </interactant>
    <interactant intactId="EBI-750020">
        <id>P49760</id>
        <label>CLK2</label>
    </interactant>
    <organismsDiffer>false</organismsDiffer>
    <experiments>3</experiments>
</comment>
<comment type="interaction">
    <interactant intactId="EBI-9867283">
        <id>Q86XT4</id>
    </interactant>
    <interactant intactId="EBI-2349927">
        <id>Q5JST6</id>
        <label>EFHC2</label>
    </interactant>
    <organismsDiffer>false</organismsDiffer>
    <experiments>3</experiments>
</comment>
<comment type="interaction">
    <interactant intactId="EBI-9867283">
        <id>Q86XT4</id>
    </interactant>
    <interactant intactId="EBI-6255981">
        <id>Q7L775</id>
        <label>EPM2AIP1</label>
    </interactant>
    <organismsDiffer>false</organismsDiffer>
    <experiments>3</experiments>
</comment>
<comment type="interaction">
    <interactant intactId="EBI-9867283">
        <id>Q86XT4</id>
    </interactant>
    <interactant intactId="EBI-12006844">
        <id>A6H8Z2</id>
        <label>FAM221B</label>
    </interactant>
    <organismsDiffer>false</organismsDiffer>
    <experiments>3</experiments>
</comment>
<comment type="interaction">
    <interactant intactId="EBI-9867283">
        <id>Q86XT4</id>
    </interactant>
    <interactant intactId="EBI-746252">
        <id>Q96CN9</id>
        <label>GCC1</label>
    </interactant>
    <organismsDiffer>false</organismsDiffer>
    <experiments>3</experiments>
</comment>
<comment type="interaction">
    <interactant intactId="EBI-9867283">
        <id>Q86XT4</id>
    </interactant>
    <interactant intactId="EBI-10220600">
        <id>Q8NA54</id>
        <label>IQUB</label>
    </interactant>
    <organismsDiffer>false</organismsDiffer>
    <experiments>3</experiments>
</comment>
<comment type="interaction">
    <interactant intactId="EBI-9867283">
        <id>Q86XT4</id>
    </interactant>
    <interactant intactId="EBI-746999">
        <id>O95198</id>
        <label>KLHL2</label>
    </interactant>
    <organismsDiffer>false</organismsDiffer>
    <experiments>3</experiments>
</comment>
<comment type="interaction">
    <interactant intactId="EBI-9867283">
        <id>Q86XT4</id>
    </interactant>
    <interactant intactId="EBI-739909">
        <id>Q969R5</id>
        <label>L3MBTL2</label>
    </interactant>
    <organismsDiffer>false</organismsDiffer>
    <experiments>3</experiments>
</comment>
<comment type="interaction">
    <interactant intactId="EBI-9867283">
        <id>Q86XT4</id>
    </interactant>
    <interactant intactId="EBI-739832">
        <id>Q8TBB1</id>
        <label>LNX1</label>
    </interactant>
    <organismsDiffer>false</organismsDiffer>
    <experiments>5</experiments>
</comment>
<comment type="interaction">
    <interactant intactId="EBI-9867283">
        <id>Q86XT4</id>
    </interactant>
    <interactant intactId="EBI-16439278">
        <id>Q6FHY5</id>
        <label>MEOX2</label>
    </interactant>
    <organismsDiffer>false</organismsDiffer>
    <experiments>3</experiments>
</comment>
<comment type="interaction">
    <interactant intactId="EBI-9867283">
        <id>Q86XT4</id>
    </interactant>
    <interactant intactId="EBI-348567">
        <id>O75928-2</id>
        <label>PIAS2</label>
    </interactant>
    <organismsDiffer>false</organismsDiffer>
    <experiments>3</experiments>
</comment>
<comment type="interaction">
    <interactant intactId="EBI-9867283">
        <id>Q86XT4</id>
    </interactant>
    <interactant intactId="EBI-12089905">
        <id>O60733</id>
        <label>PLA2G6</label>
    </interactant>
    <organismsDiffer>false</organismsDiffer>
    <experiments>3</experiments>
</comment>
<comment type="interaction">
    <interactant intactId="EBI-9867283">
        <id>Q86XT4</id>
    </interactant>
    <interactant intactId="EBI-746453">
        <id>P54725</id>
        <label>RAD23A</label>
    </interactant>
    <organismsDiffer>false</organismsDiffer>
    <experiments>3</experiments>
</comment>
<comment type="interaction">
    <interactant intactId="EBI-9867283">
        <id>Q86XT4</id>
    </interactant>
    <interactant intactId="EBI-748350">
        <id>Q9UHP6</id>
        <label>RSPH14</label>
    </interactant>
    <organismsDiffer>false</organismsDiffer>
    <experiments>3</experiments>
</comment>
<comment type="interaction">
    <interactant intactId="EBI-9867283">
        <id>Q86XT4</id>
    </interactant>
    <interactant intactId="EBI-742688">
        <id>Q9NZD8</id>
        <label>SPG21</label>
    </interactant>
    <organismsDiffer>false</organismsDiffer>
    <experiments>3</experiments>
</comment>
<comment type="interaction">
    <interactant intactId="EBI-9867283">
        <id>Q86XT4</id>
    </interactant>
    <interactant intactId="EBI-11139477">
        <id>Q96N21</id>
        <label>TEPSIN</label>
    </interactant>
    <organismsDiffer>false</organismsDiffer>
    <experiments>3</experiments>
</comment>
<comment type="interaction">
    <interactant intactId="EBI-9867283">
        <id>Q86XT4</id>
    </interactant>
    <interactant intactId="EBI-355744">
        <id>Q12933</id>
        <label>TRAF2</label>
    </interactant>
    <organismsDiffer>false</organismsDiffer>
    <experiments>3</experiments>
</comment>
<comment type="interaction">
    <interactant intactId="EBI-9867283">
        <id>Q86XT4</id>
    </interactant>
    <interactant intactId="EBI-719493">
        <id>P14373</id>
        <label>TRIM27</label>
    </interactant>
    <organismsDiffer>false</organismsDiffer>
    <experiments>3</experiments>
</comment>
<comment type="interaction">
    <interactant intactId="EBI-9867283">
        <id>Q86XT4</id>
    </interactant>
    <interactant intactId="EBI-9867283">
        <id>Q86XT4</id>
        <label>TRIM50</label>
    </interactant>
    <organismsDiffer>false</organismsDiffer>
    <experiments>6</experiments>
</comment>
<comment type="interaction">
    <interactant intactId="EBI-9867283">
        <id>Q86XT4</id>
    </interactant>
    <interactant intactId="EBI-10241197">
        <id>Q3SY00</id>
        <label>TSGA10IP</label>
    </interactant>
    <organismsDiffer>false</organismsDiffer>
    <experiments>3</experiments>
</comment>
<comment type="interaction">
    <interactant intactId="EBI-9867283">
        <id>Q86XT4</id>
    </interactant>
    <interactant intactId="EBI-3918381">
        <id>Q96PN8</id>
        <label>TSSK3</label>
    </interactant>
    <organismsDiffer>false</organismsDiffer>
    <experiments>6</experiments>
</comment>
<comment type="interaction">
    <interactant intactId="EBI-9867283">
        <id>Q86XT4</id>
    </interactant>
    <interactant intactId="EBI-7353612">
        <id>P57075-2</id>
        <label>UBASH3A</label>
    </interactant>
    <organismsDiffer>false</organismsDiffer>
    <experiments>3</experiments>
</comment>
<comment type="interaction">
    <interactant intactId="EBI-9867283">
        <id>Q86XT4</id>
    </interactant>
    <interactant intactId="EBI-743540">
        <id>P51668</id>
        <label>UBE2D1</label>
    </interactant>
    <organismsDiffer>false</organismsDiffer>
    <experiments>5</experiments>
</comment>
<comment type="interaction">
    <interactant intactId="EBI-9867283">
        <id>Q86XT4</id>
    </interactant>
    <interactant intactId="EBI-347677">
        <id>P62837</id>
        <label>UBE2D2</label>
    </interactant>
    <organismsDiffer>false</organismsDiffer>
    <experiments>3</experiments>
</comment>
<comment type="interaction">
    <interactant intactId="EBI-9867283">
        <id>Q86XT4</id>
    </interactant>
    <interactant intactId="EBI-745527">
        <id>Q9Y2X8</id>
        <label>UBE2D4</label>
    </interactant>
    <organismsDiffer>false</organismsDiffer>
    <experiments>3</experiments>
</comment>
<comment type="interaction">
    <interactant intactId="EBI-9867283">
        <id>Q86XT4</id>
    </interactant>
    <interactant intactId="EBI-2129763">
        <id>Q96LR5</id>
        <label>UBE2E2</label>
    </interactant>
    <organismsDiffer>false</organismsDiffer>
    <experiments>6</experiments>
</comment>
<comment type="interaction">
    <interactant intactId="EBI-9867283">
        <id>Q86XT4</id>
    </interactant>
    <interactant intactId="EBI-348496">
        <id>Q969T4</id>
        <label>UBE2E3</label>
    </interactant>
    <organismsDiffer>false</organismsDiffer>
    <experiments>3</experiments>
</comment>
<comment type="interaction">
    <interactant intactId="EBI-9867283">
        <id>Q86XT4</id>
    </interactant>
    <interactant intactId="EBI-473850">
        <id>P61086</id>
        <label>UBE2K</label>
    </interactant>
    <organismsDiffer>false</organismsDiffer>
    <experiments>3</experiments>
</comment>
<comment type="interaction">
    <interactant intactId="EBI-9867283">
        <id>Q86XT4</id>
    </interactant>
    <interactant intactId="EBI-745871">
        <id>Q9HAC8</id>
        <label>UBTD1</label>
    </interactant>
    <organismsDiffer>false</organismsDiffer>
    <experiments>3</experiments>
</comment>
<comment type="interaction">
    <interactant intactId="EBI-9867283">
        <id>Q86XT4</id>
    </interactant>
    <interactant intactId="EBI-743272">
        <id>O75604</id>
        <label>USP2</label>
    </interactant>
    <organismsDiffer>false</organismsDiffer>
    <experiments>3</experiments>
</comment>
<comment type="interaction">
    <interactant intactId="EBI-9867283">
        <id>Q86XT4</id>
    </interactant>
    <interactant intactId="EBI-2815120">
        <id>Q6GPH4</id>
        <label>XAF1</label>
    </interactant>
    <organismsDiffer>false</organismsDiffer>
    <experiments>3</experiments>
</comment>
<comment type="interaction">
    <interactant intactId="EBI-9867283">
        <id>Q86XT4</id>
    </interactant>
    <interactant intactId="EBI-11962468">
        <id>Q7Z4V0</id>
        <label>ZNF438</label>
    </interactant>
    <organismsDiffer>false</organismsDiffer>
    <experiments>3</experiments>
</comment>
<comment type="interaction">
    <interactant intactId="EBI-9867283">
        <id>Q86XT4</id>
    </interactant>
    <interactant intactId="EBI-4395669">
        <id>Q6ZNG0</id>
        <label>ZNF620</label>
    </interactant>
    <organismsDiffer>false</organismsDiffer>
    <experiments>3</experiments>
</comment>
<comment type="interaction">
    <interactant intactId="EBI-9867283">
        <id>Q86XT4</id>
    </interactant>
    <interactant intactId="EBI-25475920">
        <id>PRO_0000449631</id>
        <label>rep</label>
        <dbReference type="UniProtKB" id="P0DTD1"/>
    </interactant>
    <organismsDiffer>true</organismsDiffer>
    <experiments>3</experiments>
</comment>
<comment type="subcellular location">
    <subcellularLocation>
        <location evidence="8 9 10">Cytoplasm</location>
    </subcellularLocation>
    <text evidence="8">Localizes mainly into discrete cytoplasmic punctuate structures heterogeneous in size and shape containing polyubiquitinated proteins.</text>
</comment>
<comment type="alternative products">
    <event type="alternative splicing"/>
    <isoform>
        <id>Q86XT4-1</id>
        <name>Alpha</name>
        <sequence type="displayed"/>
    </isoform>
    <isoform>
        <id>Q86XT4-2</id>
        <name>Beta</name>
        <sequence type="described" ref="VSP_012088"/>
    </isoform>
</comment>
<comment type="PTM">
    <text evidence="7">Auto-ubiquitinated.</text>
</comment>
<comment type="PTM">
    <text evidence="9">Acetylated by EP300 and KAT2B. HDAC6 drives TRIM50 deacetylation. Acetylation antagonizes with TRIM50 ubiquitination.</text>
</comment>
<comment type="similarity">
    <text evidence="11">Belongs to the TRIM/RBCC family.</text>
</comment>
<sequence length="487" mass="54728">MAWQVSLPELEDRLQCPICLEVFKEPLMLQCGHSYCKGCLVSLSCHLDAELRCPVCRQAVDGSSSLPNVSLARVIEALRLPGDPEPKVCVHHRNPLSLFCEKDQELICGLCGLLGSHQHHPVTPVSTVYSRMKEELAALISELKQEQKKVDELIAKLVNNRTRIVNESDVFSWVIRREFQELHHLVDEEKARCLEGIGGHTRGLVASLDMQLEQAQGTRERLAQAECVLEQFGNEDHHKFIRKFHSMASRAEMPQARPLEGAFSPISFKPGLHQADIKLTVWKRLFRKVLPAPEPLKLDPATAHPLLELSKGNTVVQCGLLAQRRASQPERFDYSTCVLASRGFSCGRHYWEVVVGSKSDWRLGVIKGTASRKGKLNRSPEHGVWLIGLKEGRVYEAFACPRVPLPVAGHPHRIGLYLHYEQGELTFFDADRPDDLRPLYTFQADFQGKLYPILDTCWHERGSNSLPMVLPPPSGPGPLSPEQPTKL</sequence>